<proteinExistence type="inferred from homology"/>
<protein>
    <recommendedName>
        <fullName evidence="1">Hydroxymethylglutaryl-CoA synthase</fullName>
        <shortName evidence="1">HMG-CoA synthase</shortName>
        <shortName evidence="1">HMGCS</shortName>
        <ecNumber evidence="1">2.3.3.10</ecNumber>
    </recommendedName>
</protein>
<sequence length="350" mass="38214">MSKVGIVSWGAYIPKYRIRTEEVARIWGDDPLRIVDVYLVDEKSVESLDEDAVTIAVEAARRALKRAGINPKRIGAVYVGTESKPYAVKPISSILVDALGLSNNVFAVDMEFACKAGSEGLVAAIGLVESGRIEYGMTVGTDTSQGEPGEHLEYSASSGGASLIVGRDGVVAELEAVYSYVSDTPDFWRREGSPYPMHGEGFTGEPAYFRHIIGAARGLMERYGYKPSDFAYVVFHQPNGRFPVRAASMLNIPMEKVKPGIVVTHIGNTYNASALMGFAKVLDIAKPGDKILLVPFGSGAGSNAFVFTVTELITERQKSGVPTVEDMLRDKIYIDYAQYLKMRKMIKLFE</sequence>
<gene>
    <name type="ordered locus">PAE2185</name>
</gene>
<comment type="function">
    <text evidence="1">Catalyzes the condensation of acetyl-CoA with acetoacetyl-CoA to form 3-hydroxy-3-methylglutaryl-CoA (HMG-CoA). Functions in the mevalonate (MVA) pathway leading to isopentenyl diphosphate (IPP), a key precursor for the biosynthesis of isoprenoid compounds that are building blocks of archaeal membrane lipids.</text>
</comment>
<comment type="catalytic activity">
    <reaction evidence="1">
        <text>acetoacetyl-CoA + acetyl-CoA + H2O = (3S)-3-hydroxy-3-methylglutaryl-CoA + CoA + H(+)</text>
        <dbReference type="Rhea" id="RHEA:10188"/>
        <dbReference type="ChEBI" id="CHEBI:15377"/>
        <dbReference type="ChEBI" id="CHEBI:15378"/>
        <dbReference type="ChEBI" id="CHEBI:43074"/>
        <dbReference type="ChEBI" id="CHEBI:57286"/>
        <dbReference type="ChEBI" id="CHEBI:57287"/>
        <dbReference type="ChEBI" id="CHEBI:57288"/>
        <dbReference type="EC" id="2.3.3.10"/>
    </reaction>
    <physiologicalReaction direction="left-to-right" evidence="1">
        <dbReference type="Rhea" id="RHEA:10189"/>
    </physiologicalReaction>
</comment>
<comment type="pathway">
    <text evidence="1">Metabolic intermediate biosynthesis; (R)-mevalonate biosynthesis; (R)-mevalonate from acetyl-CoA: step 2/3.</text>
</comment>
<comment type="subunit">
    <text evidence="1">Interacts with acetoacetyl-CoA thiolase that catalyzes the precedent step in the pathway and with a DUF35 protein. The acetoacetyl-CoA thiolase/HMG-CoA synthase complex channels the intermediate via a fused CoA-binding site, which allows for efficient coupling of the endergonic thiolase reaction with the exergonic HMGCS reaction.</text>
</comment>
<comment type="similarity">
    <text evidence="1">Belongs to the thiolase-like superfamily. Archaeal HMG-CoA synthase family.</text>
</comment>
<organism>
    <name type="scientific">Pyrobaculum aerophilum (strain ATCC 51768 / DSM 7523 / JCM 9630 / CIP 104966 / NBRC 100827 / IM2)</name>
    <dbReference type="NCBI Taxonomy" id="178306"/>
    <lineage>
        <taxon>Archaea</taxon>
        <taxon>Thermoproteota</taxon>
        <taxon>Thermoprotei</taxon>
        <taxon>Thermoproteales</taxon>
        <taxon>Thermoproteaceae</taxon>
        <taxon>Pyrobaculum</taxon>
    </lineage>
</organism>
<feature type="chain" id="PRO_0000057621" description="Hydroxymethylglutaryl-CoA synthase">
    <location>
        <begin position="1"/>
        <end position="350"/>
    </location>
</feature>
<feature type="active site" description="Proton donor/acceptor" evidence="1">
    <location>
        <position position="82"/>
    </location>
</feature>
<feature type="active site" description="Acyl-thioester intermediate" evidence="1">
    <location>
        <position position="114"/>
    </location>
</feature>
<feature type="active site" description="Proton donor/acceptor" evidence="1">
    <location>
        <position position="236"/>
    </location>
</feature>
<feature type="binding site" evidence="1">
    <location>
        <position position="30"/>
    </location>
    <ligand>
        <name>(3S)-3-hydroxy-3-methylglutaryl-CoA</name>
        <dbReference type="ChEBI" id="CHEBI:43074"/>
    </ligand>
</feature>
<feature type="binding site" evidence="1">
    <location>
        <position position="114"/>
    </location>
    <ligand>
        <name>(3S)-3-hydroxy-3-methylglutaryl-CoA</name>
        <dbReference type="ChEBI" id="CHEBI:43074"/>
    </ligand>
</feature>
<feature type="binding site" evidence="1">
    <location>
        <position position="155"/>
    </location>
    <ligand>
        <name>(3S)-3-hydroxy-3-methylglutaryl-CoA</name>
        <dbReference type="ChEBI" id="CHEBI:43074"/>
    </ligand>
</feature>
<feature type="binding site" evidence="1">
    <location>
        <position position="203"/>
    </location>
    <ligand>
        <name>(3S)-3-hydroxy-3-methylglutaryl-CoA</name>
        <dbReference type="ChEBI" id="CHEBI:43074"/>
    </ligand>
</feature>
<feature type="binding site" evidence="1">
    <location>
        <position position="236"/>
    </location>
    <ligand>
        <name>(3S)-3-hydroxy-3-methylglutaryl-CoA</name>
        <dbReference type="ChEBI" id="CHEBI:43074"/>
    </ligand>
</feature>
<feature type="binding site" evidence="1">
    <location>
        <position position="241"/>
    </location>
    <ligand>
        <name>CoA</name>
        <dbReference type="ChEBI" id="CHEBI:57287"/>
        <note>ligand shared with acetoacetyl-CoA thiolase</note>
    </ligand>
</feature>
<feature type="binding site" evidence="1">
    <location>
        <position position="245"/>
    </location>
    <ligand>
        <name>(3S)-3-hydroxy-3-methylglutaryl-CoA</name>
        <dbReference type="ChEBI" id="CHEBI:43074"/>
    </ligand>
</feature>
<feature type="binding site" evidence="1">
    <location>
        <position position="268"/>
    </location>
    <ligand>
        <name>(3S)-3-hydroxy-3-methylglutaryl-CoA</name>
        <dbReference type="ChEBI" id="CHEBI:43074"/>
    </ligand>
</feature>
<feature type="binding site" evidence="1">
    <location>
        <position position="298"/>
    </location>
    <ligand>
        <name>(3S)-3-hydroxy-3-methylglutaryl-CoA</name>
        <dbReference type="ChEBI" id="CHEBI:43074"/>
    </ligand>
</feature>
<accession>Q8ZVP4</accession>
<reference key="1">
    <citation type="journal article" date="2002" name="Proc. Natl. Acad. Sci. U.S.A.">
        <title>Genome sequence of the hyperthermophilic crenarchaeon Pyrobaculum aerophilum.</title>
        <authorList>
            <person name="Fitz-Gibbon S.T."/>
            <person name="Ladner H."/>
            <person name="Kim U.-J."/>
            <person name="Stetter K.O."/>
            <person name="Simon M.I."/>
            <person name="Miller J.H."/>
        </authorList>
    </citation>
    <scope>NUCLEOTIDE SEQUENCE [LARGE SCALE GENOMIC DNA]</scope>
    <source>
        <strain>ATCC 51768 / DSM 7523 / JCM 9630 / CIP 104966 / NBRC 100827 / IM2</strain>
    </source>
</reference>
<keyword id="KW-0012">Acyltransferase</keyword>
<keyword id="KW-0414">Isoprene biosynthesis</keyword>
<keyword id="KW-1185">Reference proteome</keyword>
<keyword id="KW-0808">Transferase</keyword>
<name>HMGCS_PYRAE</name>
<dbReference type="EC" id="2.3.3.10" evidence="1"/>
<dbReference type="EMBL" id="AE009441">
    <property type="protein sequence ID" value="AAL64012.1"/>
    <property type="molecule type" value="Genomic_DNA"/>
</dbReference>
<dbReference type="RefSeq" id="WP_011008480.1">
    <property type="nucleotide sequence ID" value="NC_003364.1"/>
</dbReference>
<dbReference type="SMR" id="Q8ZVP4"/>
<dbReference type="FunCoup" id="Q8ZVP4">
    <property type="interactions" value="102"/>
</dbReference>
<dbReference type="STRING" id="178306.PAE2185"/>
<dbReference type="EnsemblBacteria" id="AAL64012">
    <property type="protein sequence ID" value="AAL64012"/>
    <property type="gene ID" value="PAE2185"/>
</dbReference>
<dbReference type="GeneID" id="1464345"/>
<dbReference type="KEGG" id="pai:PAE2185"/>
<dbReference type="PATRIC" id="fig|178306.9.peg.1622"/>
<dbReference type="eggNOG" id="arCOG01767">
    <property type="taxonomic scope" value="Archaea"/>
</dbReference>
<dbReference type="HOGENOM" id="CLU_039592_7_0_2"/>
<dbReference type="InParanoid" id="Q8ZVP4"/>
<dbReference type="UniPathway" id="UPA00058">
    <property type="reaction ID" value="UER00102"/>
</dbReference>
<dbReference type="Proteomes" id="UP000002439">
    <property type="component" value="Chromosome"/>
</dbReference>
<dbReference type="GO" id="GO:0003985">
    <property type="term" value="F:acetyl-CoA C-acetyltransferase activity"/>
    <property type="evidence" value="ECO:0007669"/>
    <property type="project" value="UniProtKB-UniRule"/>
</dbReference>
<dbReference type="GO" id="GO:0004421">
    <property type="term" value="F:hydroxymethylglutaryl-CoA synthase activity"/>
    <property type="evidence" value="ECO:0000318"/>
    <property type="project" value="GO_Central"/>
</dbReference>
<dbReference type="GO" id="GO:0006084">
    <property type="term" value="P:acetyl-CoA metabolic process"/>
    <property type="evidence" value="ECO:0000318"/>
    <property type="project" value="GO_Central"/>
</dbReference>
<dbReference type="GO" id="GO:0010142">
    <property type="term" value="P:farnesyl diphosphate biosynthetic process, mevalonate pathway"/>
    <property type="evidence" value="ECO:0000318"/>
    <property type="project" value="GO_Central"/>
</dbReference>
<dbReference type="GO" id="GO:0019287">
    <property type="term" value="P:isopentenyl diphosphate biosynthetic process, mevalonate pathway"/>
    <property type="evidence" value="ECO:0007669"/>
    <property type="project" value="UniProtKB-UniRule"/>
</dbReference>
<dbReference type="CDD" id="cd00827">
    <property type="entry name" value="init_cond_enzymes"/>
    <property type="match status" value="1"/>
</dbReference>
<dbReference type="FunFam" id="3.40.47.10:FF:000046">
    <property type="entry name" value="UPF0219 protein M1627_1703"/>
    <property type="match status" value="1"/>
</dbReference>
<dbReference type="Gene3D" id="3.40.47.10">
    <property type="match status" value="1"/>
</dbReference>
<dbReference type="HAMAP" id="MF_01409">
    <property type="entry name" value="HMG_CoA_synth_arch"/>
    <property type="match status" value="1"/>
</dbReference>
<dbReference type="InterPro" id="IPR013747">
    <property type="entry name" value="ACP_syn_III_C"/>
</dbReference>
<dbReference type="InterPro" id="IPR004656">
    <property type="entry name" value="HMG_CoA_Synthase"/>
</dbReference>
<dbReference type="InterPro" id="IPR016039">
    <property type="entry name" value="Thiolase-like"/>
</dbReference>
<dbReference type="InterPro" id="IPR020616">
    <property type="entry name" value="Thiolase_N"/>
</dbReference>
<dbReference type="NCBIfam" id="TIGR00748">
    <property type="entry name" value="HMG_CoA_syn_Arc"/>
    <property type="match status" value="1"/>
</dbReference>
<dbReference type="NCBIfam" id="NF003274">
    <property type="entry name" value="PRK04262.1"/>
    <property type="match status" value="1"/>
</dbReference>
<dbReference type="PANTHER" id="PTHR43323">
    <property type="entry name" value="3-HYDROXY-3-METHYLGLUTARYL COENZYME A SYNTHASE"/>
    <property type="match status" value="1"/>
</dbReference>
<dbReference type="PANTHER" id="PTHR43323:SF2">
    <property type="entry name" value="HYDROXYMETHYLGLUTARYL-COA SYNTHASE"/>
    <property type="match status" value="1"/>
</dbReference>
<dbReference type="Pfam" id="PF08541">
    <property type="entry name" value="ACP_syn_III_C"/>
    <property type="match status" value="1"/>
</dbReference>
<dbReference type="Pfam" id="PF00108">
    <property type="entry name" value="Thiolase_N"/>
    <property type="match status" value="1"/>
</dbReference>
<dbReference type="SUPFAM" id="SSF53901">
    <property type="entry name" value="Thiolase-like"/>
    <property type="match status" value="2"/>
</dbReference>
<evidence type="ECO:0000255" key="1">
    <source>
        <dbReference type="HAMAP-Rule" id="MF_01409"/>
    </source>
</evidence>